<sequence>MSKINKLEHIRNIGICAHIDAGKTTTTERILYYTGKSHKIGEVHEGGATMDWMEQEQERGITITSAATTCRWQDKIINIIDTPGHVDFTIEVERSLRVLDGAVAVFDGVAGVEPQSETVWRQADKYNVPRMCFVNKMDRMGADFYRCVEMIKDRLGAKPLVIQLPVGIEENFKGIIDLVKMKAVIWKDESLGAKYFEEHIPADMKDKAEEYRAKLLDMVVELDDHVMEKYLSGEEVTEEEIKILIRNGTISAAFYPVLCGSAFKNKGVQPLLDAVVDFLPSPIDIGIVKGMEVNTGEEKDFPISITEPFSALAFKIMNDPFVGSLTFIRIYSGKITSGASVINTVKNKREKIGRMLLMHANNREDIKEASAGDIVALAGLKDTSTGDTLSDIDTQVVLERMEFPEPVIELAVEPKSTADQEKMGLALSRLAAEDPSFRVSTDHETGQTVIKGMGELHLEIIIDRMRREFKVEANIGVPQVAYRETITKACEIDYTHKKQSGGAGQFARVKIIFEPLKEVKDLKDEDKNKTFVFESKIVGGAVPKEYIPGVEKGLNNIRETGVIAGYPMIDFKATLVDGAFHDVDSSVLAFEIAAKAAFREGMPKGNPKLLEPIMKVEVITPDEYMGDIIGDLNSRRGQIQSMDPRGNAQVVTANVPLAEMFGYVNMLRSLSQGRAQFSMIFSHYDQVPSQVADIIKAKK</sequence>
<comment type="function">
    <text evidence="1">Catalyzes the GTP-dependent ribosomal translocation step during translation elongation. During this step, the ribosome changes from the pre-translocational (PRE) to the post-translocational (POST) state as the newly formed A-site-bound peptidyl-tRNA and P-site-bound deacylated tRNA move to the P and E sites, respectively. Catalyzes the coordinated movement of the two tRNA molecules, the mRNA and conformational changes in the ribosome.</text>
</comment>
<comment type="subcellular location">
    <subcellularLocation>
        <location evidence="1">Cytoplasm</location>
    </subcellularLocation>
</comment>
<comment type="similarity">
    <text evidence="1">Belongs to the TRAFAC class translation factor GTPase superfamily. Classic translation factor GTPase family. EF-G/EF-2 subfamily.</text>
</comment>
<proteinExistence type="inferred from homology"/>
<accession>Q8KTB4</accession>
<dbReference type="EMBL" id="AF502175">
    <property type="protein sequence ID" value="AAM90923.1"/>
    <property type="molecule type" value="Genomic_DNA"/>
</dbReference>
<dbReference type="SMR" id="Q8KTB4"/>
<dbReference type="GO" id="GO:0005737">
    <property type="term" value="C:cytoplasm"/>
    <property type="evidence" value="ECO:0007669"/>
    <property type="project" value="UniProtKB-SubCell"/>
</dbReference>
<dbReference type="GO" id="GO:0005525">
    <property type="term" value="F:GTP binding"/>
    <property type="evidence" value="ECO:0007669"/>
    <property type="project" value="UniProtKB-UniRule"/>
</dbReference>
<dbReference type="GO" id="GO:0003924">
    <property type="term" value="F:GTPase activity"/>
    <property type="evidence" value="ECO:0007669"/>
    <property type="project" value="InterPro"/>
</dbReference>
<dbReference type="GO" id="GO:0003746">
    <property type="term" value="F:translation elongation factor activity"/>
    <property type="evidence" value="ECO:0007669"/>
    <property type="project" value="UniProtKB-UniRule"/>
</dbReference>
<dbReference type="GO" id="GO:0032790">
    <property type="term" value="P:ribosome disassembly"/>
    <property type="evidence" value="ECO:0007669"/>
    <property type="project" value="TreeGrafter"/>
</dbReference>
<dbReference type="CDD" id="cd01886">
    <property type="entry name" value="EF-G"/>
    <property type="match status" value="1"/>
</dbReference>
<dbReference type="CDD" id="cd16262">
    <property type="entry name" value="EFG_III"/>
    <property type="match status" value="1"/>
</dbReference>
<dbReference type="CDD" id="cd01434">
    <property type="entry name" value="EFG_mtEFG1_IV"/>
    <property type="match status" value="1"/>
</dbReference>
<dbReference type="CDD" id="cd03713">
    <property type="entry name" value="EFG_mtEFG_C"/>
    <property type="match status" value="1"/>
</dbReference>
<dbReference type="CDD" id="cd04088">
    <property type="entry name" value="EFG_mtEFG_II"/>
    <property type="match status" value="1"/>
</dbReference>
<dbReference type="FunFam" id="2.40.30.10:FF:000006">
    <property type="entry name" value="Elongation factor G"/>
    <property type="match status" value="1"/>
</dbReference>
<dbReference type="FunFam" id="3.30.230.10:FF:000003">
    <property type="entry name" value="Elongation factor G"/>
    <property type="match status" value="1"/>
</dbReference>
<dbReference type="FunFam" id="3.30.70.240:FF:000001">
    <property type="entry name" value="Elongation factor G"/>
    <property type="match status" value="1"/>
</dbReference>
<dbReference type="FunFam" id="3.30.70.870:FF:000001">
    <property type="entry name" value="Elongation factor G"/>
    <property type="match status" value="1"/>
</dbReference>
<dbReference type="FunFam" id="3.40.50.300:FF:000029">
    <property type="entry name" value="Elongation factor G"/>
    <property type="match status" value="1"/>
</dbReference>
<dbReference type="Gene3D" id="3.30.230.10">
    <property type="match status" value="1"/>
</dbReference>
<dbReference type="Gene3D" id="3.30.70.240">
    <property type="match status" value="1"/>
</dbReference>
<dbReference type="Gene3D" id="3.30.70.870">
    <property type="entry name" value="Elongation Factor G (Translational Gtpase), domain 3"/>
    <property type="match status" value="1"/>
</dbReference>
<dbReference type="Gene3D" id="3.40.50.300">
    <property type="entry name" value="P-loop containing nucleotide triphosphate hydrolases"/>
    <property type="match status" value="1"/>
</dbReference>
<dbReference type="Gene3D" id="2.40.30.10">
    <property type="entry name" value="Translation factors"/>
    <property type="match status" value="1"/>
</dbReference>
<dbReference type="HAMAP" id="MF_00054_B">
    <property type="entry name" value="EF_G_EF_2_B"/>
    <property type="match status" value="1"/>
</dbReference>
<dbReference type="InterPro" id="IPR053905">
    <property type="entry name" value="EF-G-like_DII"/>
</dbReference>
<dbReference type="InterPro" id="IPR041095">
    <property type="entry name" value="EFG_II"/>
</dbReference>
<dbReference type="InterPro" id="IPR009022">
    <property type="entry name" value="EFG_III"/>
</dbReference>
<dbReference type="InterPro" id="IPR035647">
    <property type="entry name" value="EFG_III/V"/>
</dbReference>
<dbReference type="InterPro" id="IPR047872">
    <property type="entry name" value="EFG_IV"/>
</dbReference>
<dbReference type="InterPro" id="IPR035649">
    <property type="entry name" value="EFG_V"/>
</dbReference>
<dbReference type="InterPro" id="IPR000640">
    <property type="entry name" value="EFG_V-like"/>
</dbReference>
<dbReference type="InterPro" id="IPR031157">
    <property type="entry name" value="G_TR_CS"/>
</dbReference>
<dbReference type="InterPro" id="IPR027417">
    <property type="entry name" value="P-loop_NTPase"/>
</dbReference>
<dbReference type="InterPro" id="IPR020568">
    <property type="entry name" value="Ribosomal_Su5_D2-typ_SF"/>
</dbReference>
<dbReference type="InterPro" id="IPR014721">
    <property type="entry name" value="Ribsml_uS5_D2-typ_fold_subgr"/>
</dbReference>
<dbReference type="InterPro" id="IPR005225">
    <property type="entry name" value="Small_GTP-bd"/>
</dbReference>
<dbReference type="InterPro" id="IPR000795">
    <property type="entry name" value="T_Tr_GTP-bd_dom"/>
</dbReference>
<dbReference type="InterPro" id="IPR009000">
    <property type="entry name" value="Transl_B-barrel_sf"/>
</dbReference>
<dbReference type="InterPro" id="IPR004540">
    <property type="entry name" value="Transl_elong_EFG/EF2"/>
</dbReference>
<dbReference type="InterPro" id="IPR005517">
    <property type="entry name" value="Transl_elong_EFG/EF2_IV"/>
</dbReference>
<dbReference type="NCBIfam" id="TIGR00484">
    <property type="entry name" value="EF-G"/>
    <property type="match status" value="1"/>
</dbReference>
<dbReference type="NCBIfam" id="NF009381">
    <property type="entry name" value="PRK12740.1-5"/>
    <property type="match status" value="1"/>
</dbReference>
<dbReference type="NCBIfam" id="TIGR00231">
    <property type="entry name" value="small_GTP"/>
    <property type="match status" value="1"/>
</dbReference>
<dbReference type="PANTHER" id="PTHR43261:SF1">
    <property type="entry name" value="RIBOSOME-RELEASING FACTOR 2, MITOCHONDRIAL"/>
    <property type="match status" value="1"/>
</dbReference>
<dbReference type="PANTHER" id="PTHR43261">
    <property type="entry name" value="TRANSLATION ELONGATION FACTOR G-RELATED"/>
    <property type="match status" value="1"/>
</dbReference>
<dbReference type="Pfam" id="PF22042">
    <property type="entry name" value="EF-G_D2"/>
    <property type="match status" value="1"/>
</dbReference>
<dbReference type="Pfam" id="PF00679">
    <property type="entry name" value="EFG_C"/>
    <property type="match status" value="1"/>
</dbReference>
<dbReference type="Pfam" id="PF14492">
    <property type="entry name" value="EFG_III"/>
    <property type="match status" value="1"/>
</dbReference>
<dbReference type="Pfam" id="PF03764">
    <property type="entry name" value="EFG_IV"/>
    <property type="match status" value="1"/>
</dbReference>
<dbReference type="Pfam" id="PF00009">
    <property type="entry name" value="GTP_EFTU"/>
    <property type="match status" value="1"/>
</dbReference>
<dbReference type="PRINTS" id="PR00315">
    <property type="entry name" value="ELONGATNFCT"/>
</dbReference>
<dbReference type="SMART" id="SM00838">
    <property type="entry name" value="EFG_C"/>
    <property type="match status" value="1"/>
</dbReference>
<dbReference type="SMART" id="SM00889">
    <property type="entry name" value="EFG_IV"/>
    <property type="match status" value="1"/>
</dbReference>
<dbReference type="SUPFAM" id="SSF54980">
    <property type="entry name" value="EF-G C-terminal domain-like"/>
    <property type="match status" value="2"/>
</dbReference>
<dbReference type="SUPFAM" id="SSF52540">
    <property type="entry name" value="P-loop containing nucleoside triphosphate hydrolases"/>
    <property type="match status" value="1"/>
</dbReference>
<dbReference type="SUPFAM" id="SSF54211">
    <property type="entry name" value="Ribosomal protein S5 domain 2-like"/>
    <property type="match status" value="1"/>
</dbReference>
<dbReference type="SUPFAM" id="SSF50447">
    <property type="entry name" value="Translation proteins"/>
    <property type="match status" value="1"/>
</dbReference>
<dbReference type="PROSITE" id="PS00301">
    <property type="entry name" value="G_TR_1"/>
    <property type="match status" value="1"/>
</dbReference>
<dbReference type="PROSITE" id="PS51722">
    <property type="entry name" value="G_TR_2"/>
    <property type="match status" value="1"/>
</dbReference>
<name>EFG_RICHE</name>
<evidence type="ECO:0000255" key="1">
    <source>
        <dbReference type="HAMAP-Rule" id="MF_00054"/>
    </source>
</evidence>
<gene>
    <name evidence="1" type="primary">fusA</name>
</gene>
<feature type="chain" id="PRO_0000091198" description="Elongation factor G">
    <location>
        <begin position="1"/>
        <end position="699"/>
    </location>
</feature>
<feature type="domain" description="tr-type G">
    <location>
        <begin position="8"/>
        <end position="283"/>
    </location>
</feature>
<feature type="binding site" evidence="1">
    <location>
        <begin position="17"/>
        <end position="24"/>
    </location>
    <ligand>
        <name>GTP</name>
        <dbReference type="ChEBI" id="CHEBI:37565"/>
    </ligand>
</feature>
<feature type="binding site" evidence="1">
    <location>
        <begin position="81"/>
        <end position="85"/>
    </location>
    <ligand>
        <name>GTP</name>
        <dbReference type="ChEBI" id="CHEBI:37565"/>
    </ligand>
</feature>
<feature type="binding site" evidence="1">
    <location>
        <begin position="135"/>
        <end position="138"/>
    </location>
    <ligand>
        <name>GTP</name>
        <dbReference type="ChEBI" id="CHEBI:37565"/>
    </ligand>
</feature>
<keyword id="KW-0963">Cytoplasm</keyword>
<keyword id="KW-0251">Elongation factor</keyword>
<keyword id="KW-0342">GTP-binding</keyword>
<keyword id="KW-0547">Nucleotide-binding</keyword>
<keyword id="KW-0648">Protein biosynthesis</keyword>
<protein>
    <recommendedName>
        <fullName evidence="1">Elongation factor G</fullName>
        <shortName evidence="1">EF-G</shortName>
    </recommendedName>
</protein>
<reference key="1">
    <citation type="journal article" date="2002" name="Mol. Biol. Evol.">
        <title>Proliferation and deterioration of Rickettsia palindromic elements.</title>
        <authorList>
            <person name="Amiri H."/>
            <person name="Alsmark C.M."/>
            <person name="Andersson S.G.E."/>
        </authorList>
    </citation>
    <scope>NUCLEOTIDE SEQUENCE [GENOMIC DNA]</scope>
</reference>
<organism>
    <name type="scientific">Rickettsia helvetica</name>
    <dbReference type="NCBI Taxonomy" id="35789"/>
    <lineage>
        <taxon>Bacteria</taxon>
        <taxon>Pseudomonadati</taxon>
        <taxon>Pseudomonadota</taxon>
        <taxon>Alphaproteobacteria</taxon>
        <taxon>Rickettsiales</taxon>
        <taxon>Rickettsiaceae</taxon>
        <taxon>Rickettsieae</taxon>
        <taxon>Rickettsia</taxon>
        <taxon>spotted fever group</taxon>
    </lineage>
</organism>